<name>RL29_METMA</name>
<proteinExistence type="inferred from homology"/>
<protein>
    <recommendedName>
        <fullName evidence="1">Large ribosomal subunit protein uL29</fullName>
    </recommendedName>
    <alternativeName>
        <fullName evidence="2">50S ribosomal protein L29</fullName>
    </alternativeName>
</protein>
<comment type="similarity">
    <text evidence="1">Belongs to the universal ribosomal protein uL29 family.</text>
</comment>
<sequence length="67" mass="7612">MAILRTSEIRTMTIEERADELENLKNELVRERALTSAGGAPDNPGRIGEIRRTIARIKTIQHELNEI</sequence>
<reference key="1">
    <citation type="journal article" date="2002" name="J. Mol. Microbiol. Biotechnol.">
        <title>The genome of Methanosarcina mazei: evidence for lateral gene transfer between Bacteria and Archaea.</title>
        <authorList>
            <person name="Deppenmeier U."/>
            <person name="Johann A."/>
            <person name="Hartsch T."/>
            <person name="Merkl R."/>
            <person name="Schmitz R.A."/>
            <person name="Martinez-Arias R."/>
            <person name="Henne A."/>
            <person name="Wiezer A."/>
            <person name="Baeumer S."/>
            <person name="Jacobi C."/>
            <person name="Brueggemann H."/>
            <person name="Lienard T."/>
            <person name="Christmann A."/>
            <person name="Boemecke M."/>
            <person name="Steckel S."/>
            <person name="Bhattacharyya A."/>
            <person name="Lykidis A."/>
            <person name="Overbeek R."/>
            <person name="Klenk H.-P."/>
            <person name="Gunsalus R.P."/>
            <person name="Fritz H.-J."/>
            <person name="Gottschalk G."/>
        </authorList>
    </citation>
    <scope>NUCLEOTIDE SEQUENCE [LARGE SCALE GENOMIC DNA]</scope>
    <source>
        <strain>ATCC BAA-159 / DSM 3647 / Goe1 / Go1 / JCM 11833 / OCM 88</strain>
    </source>
</reference>
<evidence type="ECO:0000255" key="1">
    <source>
        <dbReference type="HAMAP-Rule" id="MF_00374"/>
    </source>
</evidence>
<evidence type="ECO:0000305" key="2"/>
<dbReference type="EMBL" id="AE008384">
    <property type="protein sequence ID" value="AAM31827.1"/>
    <property type="molecule type" value="Genomic_DNA"/>
</dbReference>
<dbReference type="SMR" id="Q8PV43"/>
<dbReference type="KEGG" id="mma:MM_2131"/>
<dbReference type="PATRIC" id="fig|192952.21.peg.2445"/>
<dbReference type="eggNOG" id="arCOG00785">
    <property type="taxonomic scope" value="Archaea"/>
</dbReference>
<dbReference type="HOGENOM" id="CLU_158491_2_2_2"/>
<dbReference type="Proteomes" id="UP000000595">
    <property type="component" value="Chromosome"/>
</dbReference>
<dbReference type="GO" id="GO:1990904">
    <property type="term" value="C:ribonucleoprotein complex"/>
    <property type="evidence" value="ECO:0007669"/>
    <property type="project" value="UniProtKB-KW"/>
</dbReference>
<dbReference type="GO" id="GO:0005840">
    <property type="term" value="C:ribosome"/>
    <property type="evidence" value="ECO:0007669"/>
    <property type="project" value="UniProtKB-KW"/>
</dbReference>
<dbReference type="GO" id="GO:0003735">
    <property type="term" value="F:structural constituent of ribosome"/>
    <property type="evidence" value="ECO:0007669"/>
    <property type="project" value="InterPro"/>
</dbReference>
<dbReference type="GO" id="GO:0006412">
    <property type="term" value="P:translation"/>
    <property type="evidence" value="ECO:0007669"/>
    <property type="project" value="UniProtKB-UniRule"/>
</dbReference>
<dbReference type="CDD" id="cd00427">
    <property type="entry name" value="Ribosomal_L29_HIP"/>
    <property type="match status" value="1"/>
</dbReference>
<dbReference type="Gene3D" id="1.10.287.310">
    <property type="match status" value="1"/>
</dbReference>
<dbReference type="HAMAP" id="MF_00374">
    <property type="entry name" value="Ribosomal_uL29"/>
    <property type="match status" value="1"/>
</dbReference>
<dbReference type="InterPro" id="IPR001854">
    <property type="entry name" value="Ribosomal_uL29"/>
</dbReference>
<dbReference type="InterPro" id="IPR018254">
    <property type="entry name" value="Ribosomal_uL29_CS"/>
</dbReference>
<dbReference type="InterPro" id="IPR036049">
    <property type="entry name" value="Ribosomal_uL29_sf"/>
</dbReference>
<dbReference type="NCBIfam" id="TIGR00012">
    <property type="entry name" value="L29"/>
    <property type="match status" value="1"/>
</dbReference>
<dbReference type="Pfam" id="PF00831">
    <property type="entry name" value="Ribosomal_L29"/>
    <property type="match status" value="1"/>
</dbReference>
<dbReference type="SUPFAM" id="SSF46561">
    <property type="entry name" value="Ribosomal protein L29 (L29p)"/>
    <property type="match status" value="1"/>
</dbReference>
<dbReference type="PROSITE" id="PS00579">
    <property type="entry name" value="RIBOSOMAL_L29"/>
    <property type="match status" value="1"/>
</dbReference>
<accession>Q8PV43</accession>
<gene>
    <name evidence="1" type="primary">rpl29</name>
    <name type="ordered locus">MM_2131</name>
</gene>
<feature type="chain" id="PRO_0000130513" description="Large ribosomal subunit protein uL29">
    <location>
        <begin position="1"/>
        <end position="67"/>
    </location>
</feature>
<keyword id="KW-0687">Ribonucleoprotein</keyword>
<keyword id="KW-0689">Ribosomal protein</keyword>
<organism>
    <name type="scientific">Methanosarcina mazei (strain ATCC BAA-159 / DSM 3647 / Goe1 / Go1 / JCM 11833 / OCM 88)</name>
    <name type="common">Methanosarcina frisia</name>
    <dbReference type="NCBI Taxonomy" id="192952"/>
    <lineage>
        <taxon>Archaea</taxon>
        <taxon>Methanobacteriati</taxon>
        <taxon>Methanobacteriota</taxon>
        <taxon>Stenosarchaea group</taxon>
        <taxon>Methanomicrobia</taxon>
        <taxon>Methanosarcinales</taxon>
        <taxon>Methanosarcinaceae</taxon>
        <taxon>Methanosarcina</taxon>
    </lineage>
</organism>